<feature type="chain" id="PRO_0000216204" description="UPF0181 protein VPA0916">
    <location>
        <begin position="1"/>
        <end position="52"/>
    </location>
</feature>
<evidence type="ECO:0000255" key="1">
    <source>
        <dbReference type="HAMAP-Rule" id="MF_00507"/>
    </source>
</evidence>
<dbReference type="EMBL" id="BA000032">
    <property type="protein sequence ID" value="BAC62259.1"/>
    <property type="molecule type" value="Genomic_DNA"/>
</dbReference>
<dbReference type="RefSeq" id="NP_800426.1">
    <property type="nucleotide sequence ID" value="NC_004605.1"/>
</dbReference>
<dbReference type="RefSeq" id="WP_005479401.1">
    <property type="nucleotide sequence ID" value="NC_004605.1"/>
</dbReference>
<dbReference type="SMR" id="Q87HP7"/>
<dbReference type="GeneID" id="1191605"/>
<dbReference type="KEGG" id="vpa:VPA0916"/>
<dbReference type="PATRIC" id="fig|223926.6.peg.3847"/>
<dbReference type="eggNOG" id="COG3140">
    <property type="taxonomic scope" value="Bacteria"/>
</dbReference>
<dbReference type="HOGENOM" id="CLU_185263_1_0_6"/>
<dbReference type="Proteomes" id="UP000002493">
    <property type="component" value="Chromosome 2"/>
</dbReference>
<dbReference type="HAMAP" id="MF_00507">
    <property type="entry name" value="UPF0181"/>
    <property type="match status" value="1"/>
</dbReference>
<dbReference type="InterPro" id="IPR005371">
    <property type="entry name" value="UPF0181"/>
</dbReference>
<dbReference type="NCBIfam" id="NF003476">
    <property type="entry name" value="PRK05114.1"/>
    <property type="match status" value="1"/>
</dbReference>
<dbReference type="Pfam" id="PF03701">
    <property type="entry name" value="UPF0181"/>
    <property type="match status" value="1"/>
</dbReference>
<gene>
    <name type="ordered locus">VPA0916</name>
</gene>
<comment type="similarity">
    <text evidence="1">Belongs to the UPF0181 family.</text>
</comment>
<protein>
    <recommendedName>
        <fullName evidence="1">UPF0181 protein VPA0916</fullName>
    </recommendedName>
</protein>
<organism>
    <name type="scientific">Vibrio parahaemolyticus serotype O3:K6 (strain RIMD 2210633)</name>
    <dbReference type="NCBI Taxonomy" id="223926"/>
    <lineage>
        <taxon>Bacteria</taxon>
        <taxon>Pseudomonadati</taxon>
        <taxon>Pseudomonadota</taxon>
        <taxon>Gammaproteobacteria</taxon>
        <taxon>Vibrionales</taxon>
        <taxon>Vibrionaceae</taxon>
        <taxon>Vibrio</taxon>
    </lineage>
</organism>
<sequence>MFDDLPPISHKEQQEAVERIQELMAKGTSTAEAIKIVADQIRAEYAAKQQGS</sequence>
<name>Y4916_VIBPA</name>
<proteinExistence type="inferred from homology"/>
<reference key="1">
    <citation type="journal article" date="2003" name="Lancet">
        <title>Genome sequence of Vibrio parahaemolyticus: a pathogenic mechanism distinct from that of V. cholerae.</title>
        <authorList>
            <person name="Makino K."/>
            <person name="Oshima K."/>
            <person name="Kurokawa K."/>
            <person name="Yokoyama K."/>
            <person name="Uda T."/>
            <person name="Tagomori K."/>
            <person name="Iijima Y."/>
            <person name="Najima M."/>
            <person name="Nakano M."/>
            <person name="Yamashita A."/>
            <person name="Kubota Y."/>
            <person name="Kimura S."/>
            <person name="Yasunaga T."/>
            <person name="Honda T."/>
            <person name="Shinagawa H."/>
            <person name="Hattori M."/>
            <person name="Iida T."/>
        </authorList>
    </citation>
    <scope>NUCLEOTIDE SEQUENCE [LARGE SCALE GENOMIC DNA]</scope>
    <source>
        <strain>RIMD 2210633</strain>
    </source>
</reference>
<accession>Q87HP7</accession>